<name>SYVN1_MOUSE</name>
<feature type="chain" id="PRO_0000280549" description="E3 ubiquitin-protein ligase synoviolin">
    <location>
        <begin position="1"/>
        <end position="612"/>
    </location>
</feature>
<feature type="topological domain" description="Cytoplasmic" evidence="16">
    <location>
        <begin position="1"/>
        <end position="4"/>
    </location>
</feature>
<feature type="transmembrane region" description="Helical" evidence="3">
    <location>
        <begin position="5"/>
        <end position="25"/>
    </location>
</feature>
<feature type="topological domain" description="Lumenal" evidence="16">
    <location>
        <begin position="26"/>
        <end position="41"/>
    </location>
</feature>
<feature type="transmembrane region" description="Helical" evidence="3">
    <location>
        <begin position="42"/>
        <end position="62"/>
    </location>
</feature>
<feature type="topological domain" description="Cytoplasmic" evidence="16">
    <location>
        <begin position="63"/>
        <end position="98"/>
    </location>
</feature>
<feature type="transmembrane region" description="Helical" evidence="3">
    <location>
        <begin position="99"/>
        <end position="119"/>
    </location>
</feature>
<feature type="topological domain" description="Lumenal" evidence="16">
    <location>
        <begin position="120"/>
        <end position="140"/>
    </location>
</feature>
<feature type="transmembrane region" description="Helical" evidence="3">
    <location>
        <begin position="141"/>
        <end position="161"/>
    </location>
</feature>
<feature type="topological domain" description="Cytoplasmic" evidence="16">
    <location>
        <begin position="162"/>
        <end position="169"/>
    </location>
</feature>
<feature type="transmembrane region" description="Helical" evidence="3">
    <location>
        <begin position="170"/>
        <end position="190"/>
    </location>
</feature>
<feature type="topological domain" description="Lumenal" evidence="16">
    <location>
        <begin position="191"/>
        <end position="224"/>
    </location>
</feature>
<feature type="transmembrane region" description="Helical" evidence="3">
    <location>
        <begin position="225"/>
        <end position="245"/>
    </location>
</feature>
<feature type="topological domain" description="Cytoplasmic" evidence="16">
    <location>
        <begin position="246"/>
        <end position="612"/>
    </location>
</feature>
<feature type="zinc finger region" description="RING-type; atypical" evidence="4">
    <location>
        <begin position="291"/>
        <end position="330"/>
    </location>
</feature>
<feature type="region of interest" description="Involved in FAM8A1 interaction" evidence="2">
    <location>
        <begin position="1"/>
        <end position="251"/>
    </location>
</feature>
<feature type="region of interest" description="Interaction with SEL1L" evidence="12">
    <location>
        <begin position="21"/>
        <end position="42"/>
    </location>
</feature>
<feature type="region of interest" description="Interaction with p53/TP53" evidence="10">
    <location>
        <begin position="236"/>
        <end position="270"/>
    </location>
</feature>
<feature type="region of interest" description="Disordered" evidence="5">
    <location>
        <begin position="337"/>
        <end position="375"/>
    </location>
</feature>
<feature type="region of interest" description="Disordered" evidence="5">
    <location>
        <begin position="393"/>
        <end position="449"/>
    </location>
</feature>
<feature type="region of interest" description="HAF-H domain; necessary to form higher-order Hrd1 complexes" evidence="2">
    <location>
        <begin position="474"/>
        <end position="529"/>
    </location>
</feature>
<feature type="region of interest" description="Disordered" evidence="5">
    <location>
        <begin position="530"/>
        <end position="612"/>
    </location>
</feature>
<feature type="compositionally biased region" description="Pro residues" evidence="5">
    <location>
        <begin position="341"/>
        <end position="375"/>
    </location>
</feature>
<feature type="compositionally biased region" description="Pro residues" evidence="5">
    <location>
        <begin position="393"/>
        <end position="409"/>
    </location>
</feature>
<feature type="compositionally biased region" description="Low complexity" evidence="5">
    <location>
        <begin position="416"/>
        <end position="434"/>
    </location>
</feature>
<feature type="compositionally biased region" description="Pro residues" evidence="5">
    <location>
        <begin position="435"/>
        <end position="449"/>
    </location>
</feature>
<feature type="compositionally biased region" description="Low complexity" evidence="5">
    <location>
        <begin position="539"/>
        <end position="559"/>
    </location>
</feature>
<feature type="compositionally biased region" description="Pro residues" evidence="5">
    <location>
        <begin position="560"/>
        <end position="570"/>
    </location>
</feature>
<feature type="compositionally biased region" description="Acidic residues" evidence="5">
    <location>
        <begin position="586"/>
        <end position="595"/>
    </location>
</feature>
<feature type="binding site" evidence="2">
    <location>
        <position position="291"/>
    </location>
    <ligand>
        <name>Zn(2+)</name>
        <dbReference type="ChEBI" id="CHEBI:29105"/>
        <label>1</label>
    </ligand>
</feature>
<feature type="binding site" evidence="2">
    <location>
        <position position="294"/>
    </location>
    <ligand>
        <name>Zn(2+)</name>
        <dbReference type="ChEBI" id="CHEBI:29105"/>
        <label>1</label>
    </ligand>
</feature>
<feature type="binding site" evidence="2">
    <location>
        <position position="307"/>
    </location>
    <ligand>
        <name>Zn(2+)</name>
        <dbReference type="ChEBI" id="CHEBI:29105"/>
        <label>2</label>
    </ligand>
</feature>
<feature type="binding site" evidence="2">
    <location>
        <position position="309"/>
    </location>
    <ligand>
        <name>Zn(2+)</name>
        <dbReference type="ChEBI" id="CHEBI:29105"/>
        <label>2</label>
    </ligand>
</feature>
<feature type="binding site" evidence="2">
    <location>
        <position position="312"/>
    </location>
    <ligand>
        <name>Zn(2+)</name>
        <dbReference type="ChEBI" id="CHEBI:29105"/>
        <label>1</label>
    </ligand>
</feature>
<feature type="binding site" evidence="2">
    <location>
        <position position="315"/>
    </location>
    <ligand>
        <name>Zn(2+)</name>
        <dbReference type="ChEBI" id="CHEBI:29105"/>
        <label>1</label>
    </ligand>
</feature>
<feature type="binding site" evidence="2">
    <location>
        <position position="326"/>
    </location>
    <ligand>
        <name>Zn(2+)</name>
        <dbReference type="ChEBI" id="CHEBI:29105"/>
        <label>2</label>
    </ligand>
</feature>
<feature type="binding site" evidence="2">
    <location>
        <position position="329"/>
    </location>
    <ligand>
        <name>Zn(2+)</name>
        <dbReference type="ChEBI" id="CHEBI:29105"/>
        <label>2</label>
    </ligand>
</feature>
<feature type="modified residue" description="Phosphoserine" evidence="2">
    <location>
        <position position="608"/>
    </location>
</feature>
<feature type="splice variant" id="VSP_023779" description="In isoform 2." evidence="15">
    <original>E</original>
    <variation>EVICWWPQRTGFRGGYPNDWFSYHPLLTPQ</variation>
    <location>
        <position position="75"/>
    </location>
</feature>
<feature type="splice variant" id="VSP_023780" description="In isoform 2." evidence="15">
    <location>
        <begin position="127"/>
        <end position="177"/>
    </location>
</feature>
<feature type="splice variant" id="VSP_023781" description="In isoform 2." evidence="15">
    <original>FPQGLLP</original>
    <variation>CKWPFIC</variation>
    <location>
        <begin position="369"/>
        <end position="375"/>
    </location>
</feature>
<feature type="splice variant" id="VSP_023782" description="In isoform 2." evidence="15">
    <original>AP</original>
    <variation>GK</variation>
    <location>
        <begin position="577"/>
        <end position="578"/>
    </location>
</feature>
<feature type="splice variant" id="VSP_023783" description="In isoform 2." evidence="15">
    <location>
        <begin position="579"/>
        <end position="612"/>
    </location>
</feature>
<feature type="sequence conflict" description="In Ref. 2; BAB23474 and 3; AAH46829." evidence="16" ref="2 3">
    <original>V</original>
    <variation>M</variation>
    <location>
        <position position="287"/>
    </location>
</feature>
<dbReference type="EC" id="2.3.2.27" evidence="13 14"/>
<dbReference type="EMBL" id="AK122558">
    <property type="protein sequence ID" value="BAC65840.3"/>
    <property type="status" value="ALT_SEQ"/>
    <property type="molecule type" value="Transcribed_RNA"/>
</dbReference>
<dbReference type="EMBL" id="AK004688">
    <property type="protein sequence ID" value="BAB23474.2"/>
    <property type="molecule type" value="mRNA"/>
</dbReference>
<dbReference type="EMBL" id="BC042199">
    <property type="protein sequence ID" value="AAH42199.1"/>
    <property type="molecule type" value="mRNA"/>
</dbReference>
<dbReference type="EMBL" id="BC046829">
    <property type="protein sequence ID" value="AAH46829.1"/>
    <property type="molecule type" value="mRNA"/>
</dbReference>
<dbReference type="EMBL" id="BC057917">
    <property type="protein sequence ID" value="AAH57917.1"/>
    <property type="molecule type" value="mRNA"/>
</dbReference>
<dbReference type="EMBL" id="BC080722">
    <property type="protein sequence ID" value="AAH80722.1"/>
    <property type="molecule type" value="mRNA"/>
</dbReference>
<dbReference type="CCDS" id="CCDS29487.1">
    <molecule id="Q9DBY1-1"/>
</dbReference>
<dbReference type="RefSeq" id="NP_001158181.1">
    <property type="nucleotide sequence ID" value="NM_001164709.1"/>
</dbReference>
<dbReference type="RefSeq" id="NP_083045.4">
    <property type="nucleotide sequence ID" value="NM_028769.5"/>
</dbReference>
<dbReference type="RefSeq" id="XP_006531913.1">
    <property type="nucleotide sequence ID" value="XM_006531850.3"/>
</dbReference>
<dbReference type="SMR" id="Q9DBY1"/>
<dbReference type="BioGRID" id="216511">
    <property type="interactions" value="20"/>
</dbReference>
<dbReference type="FunCoup" id="Q9DBY1">
    <property type="interactions" value="2024"/>
</dbReference>
<dbReference type="IntAct" id="Q9DBY1">
    <property type="interactions" value="4"/>
</dbReference>
<dbReference type="MINT" id="Q9DBY1"/>
<dbReference type="STRING" id="10090.ENSMUSP00000114843"/>
<dbReference type="GlyGen" id="Q9DBY1">
    <property type="glycosylation" value="2 sites"/>
</dbReference>
<dbReference type="iPTMnet" id="Q9DBY1"/>
<dbReference type="PhosphoSitePlus" id="Q9DBY1"/>
<dbReference type="PaxDb" id="10090-ENSMUSP00000114843"/>
<dbReference type="PeptideAtlas" id="Q9DBY1"/>
<dbReference type="ProteomicsDB" id="254510">
    <molecule id="Q9DBY1-1"/>
</dbReference>
<dbReference type="ProteomicsDB" id="254511">
    <molecule id="Q9DBY1-2"/>
</dbReference>
<dbReference type="Pumba" id="Q9DBY1"/>
<dbReference type="DNASU" id="74126"/>
<dbReference type="GeneID" id="74126"/>
<dbReference type="KEGG" id="mmu:74126"/>
<dbReference type="UCSC" id="uc008ggm.2">
    <molecule id="Q9DBY1-1"/>
    <property type="organism name" value="mouse"/>
</dbReference>
<dbReference type="AGR" id="MGI:1921376"/>
<dbReference type="CTD" id="84447"/>
<dbReference type="MGI" id="MGI:1921376">
    <property type="gene designation" value="Syvn1"/>
</dbReference>
<dbReference type="eggNOG" id="KOG0802">
    <property type="taxonomic scope" value="Eukaryota"/>
</dbReference>
<dbReference type="InParanoid" id="Q9DBY1"/>
<dbReference type="OrthoDB" id="7759664at2759"/>
<dbReference type="PhylomeDB" id="Q9DBY1"/>
<dbReference type="TreeFam" id="TF318635"/>
<dbReference type="Reactome" id="R-MMU-5358346">
    <property type="pathway name" value="Hedgehog ligand biogenesis"/>
</dbReference>
<dbReference type="UniPathway" id="UPA00143"/>
<dbReference type="BioGRID-ORCS" id="74126">
    <property type="hits" value="19 hits in 79 CRISPR screens"/>
</dbReference>
<dbReference type="ChiTaRS" id="Syvn1">
    <property type="organism name" value="mouse"/>
</dbReference>
<dbReference type="PRO" id="PR:Q9DBY1"/>
<dbReference type="Proteomes" id="UP000000589">
    <property type="component" value="Unplaced"/>
</dbReference>
<dbReference type="RNAct" id="Q9DBY1">
    <property type="molecule type" value="protein"/>
</dbReference>
<dbReference type="GO" id="GO:0005783">
    <property type="term" value="C:endoplasmic reticulum"/>
    <property type="evidence" value="ECO:0000266"/>
    <property type="project" value="MGI"/>
</dbReference>
<dbReference type="GO" id="GO:0044322">
    <property type="term" value="C:endoplasmic reticulum quality control compartment"/>
    <property type="evidence" value="ECO:0000314"/>
    <property type="project" value="UniProtKB"/>
</dbReference>
<dbReference type="GO" id="GO:0000839">
    <property type="term" value="C:Hrd1p ubiquitin ligase ERAD-L complex"/>
    <property type="evidence" value="ECO:0000250"/>
    <property type="project" value="UniProtKB"/>
</dbReference>
<dbReference type="GO" id="GO:0000151">
    <property type="term" value="C:ubiquitin ligase complex"/>
    <property type="evidence" value="ECO:0000266"/>
    <property type="project" value="MGI"/>
</dbReference>
<dbReference type="GO" id="GO:0061630">
    <property type="term" value="F:ubiquitin protein ligase activity"/>
    <property type="evidence" value="ECO:0000314"/>
    <property type="project" value="UniProtKB"/>
</dbReference>
<dbReference type="GO" id="GO:0008270">
    <property type="term" value="F:zinc ion binding"/>
    <property type="evidence" value="ECO:0007669"/>
    <property type="project" value="UniProtKB-KW"/>
</dbReference>
<dbReference type="GO" id="GO:0036503">
    <property type="term" value="P:ERAD pathway"/>
    <property type="evidence" value="ECO:0000314"/>
    <property type="project" value="ParkinsonsUK-UCL"/>
</dbReference>
<dbReference type="GO" id="GO:0002327">
    <property type="term" value="P:immature B cell differentiation"/>
    <property type="evidence" value="ECO:0000315"/>
    <property type="project" value="UniProtKB"/>
</dbReference>
<dbReference type="GO" id="GO:0001701">
    <property type="term" value="P:in utero embryonic development"/>
    <property type="evidence" value="ECO:0000315"/>
    <property type="project" value="MGI"/>
</dbReference>
<dbReference type="GO" id="GO:0070059">
    <property type="term" value="P:intrinsic apoptotic signaling pathway in response to endoplasmic reticulum stress"/>
    <property type="evidence" value="ECO:0000315"/>
    <property type="project" value="MGI"/>
</dbReference>
<dbReference type="GO" id="GO:1902236">
    <property type="term" value="P:negative regulation of endoplasmic reticulum stress-induced intrinsic apoptotic signaling pathway"/>
    <property type="evidence" value="ECO:0000315"/>
    <property type="project" value="MGI"/>
</dbReference>
<dbReference type="GO" id="GO:0030163">
    <property type="term" value="P:protein catabolic process"/>
    <property type="evidence" value="ECO:0000315"/>
    <property type="project" value="ParkinsonsUK-UCL"/>
</dbReference>
<dbReference type="GO" id="GO:0050821">
    <property type="term" value="P:protein stabilization"/>
    <property type="evidence" value="ECO:0000314"/>
    <property type="project" value="ParkinsonsUK-UCL"/>
</dbReference>
<dbReference type="GO" id="GO:0016567">
    <property type="term" value="P:protein ubiquitination"/>
    <property type="evidence" value="ECO:0007669"/>
    <property type="project" value="UniProtKB-UniPathway"/>
</dbReference>
<dbReference type="GO" id="GO:0006986">
    <property type="term" value="P:response to unfolded protein"/>
    <property type="evidence" value="ECO:0000266"/>
    <property type="project" value="MGI"/>
</dbReference>
<dbReference type="GO" id="GO:0006511">
    <property type="term" value="P:ubiquitin-dependent protein catabolic process"/>
    <property type="evidence" value="ECO:0000314"/>
    <property type="project" value="UniProtKB"/>
</dbReference>
<dbReference type="CDD" id="cd16479">
    <property type="entry name" value="RING-H2_synoviolin"/>
    <property type="match status" value="1"/>
</dbReference>
<dbReference type="FunFam" id="3.30.40.10:FF:000088">
    <property type="entry name" value="E3 ubiquitin-protein ligase synoviolin"/>
    <property type="match status" value="1"/>
</dbReference>
<dbReference type="Gene3D" id="3.30.40.10">
    <property type="entry name" value="Zinc/RING finger domain, C3HC4 (zinc finger)"/>
    <property type="match status" value="1"/>
</dbReference>
<dbReference type="InterPro" id="IPR050731">
    <property type="entry name" value="HRD1_E3_ubiq-ligases"/>
</dbReference>
<dbReference type="InterPro" id="IPR001841">
    <property type="entry name" value="Znf_RING"/>
</dbReference>
<dbReference type="InterPro" id="IPR013083">
    <property type="entry name" value="Znf_RING/FYVE/PHD"/>
</dbReference>
<dbReference type="PANTHER" id="PTHR22763:SF184">
    <property type="entry name" value="E3 UBIQUITIN-PROTEIN LIGASE SYNOVIOLIN"/>
    <property type="match status" value="1"/>
</dbReference>
<dbReference type="PANTHER" id="PTHR22763">
    <property type="entry name" value="RING ZINC FINGER PROTEIN"/>
    <property type="match status" value="1"/>
</dbReference>
<dbReference type="Pfam" id="PF13639">
    <property type="entry name" value="zf-RING_2"/>
    <property type="match status" value="1"/>
</dbReference>
<dbReference type="SMART" id="SM00184">
    <property type="entry name" value="RING"/>
    <property type="match status" value="1"/>
</dbReference>
<dbReference type="SUPFAM" id="SSF57850">
    <property type="entry name" value="RING/U-box"/>
    <property type="match status" value="1"/>
</dbReference>
<dbReference type="PROSITE" id="PS50089">
    <property type="entry name" value="ZF_RING_2"/>
    <property type="match status" value="1"/>
</dbReference>
<keyword id="KW-0025">Alternative splicing</keyword>
<keyword id="KW-0217">Developmental protein</keyword>
<keyword id="KW-0256">Endoplasmic reticulum</keyword>
<keyword id="KW-0472">Membrane</keyword>
<keyword id="KW-0479">Metal-binding</keyword>
<keyword id="KW-0597">Phosphoprotein</keyword>
<keyword id="KW-1185">Reference proteome</keyword>
<keyword id="KW-0808">Transferase</keyword>
<keyword id="KW-0812">Transmembrane</keyword>
<keyword id="KW-1133">Transmembrane helix</keyword>
<keyword id="KW-0832">Ubl conjugation</keyword>
<keyword id="KW-0833">Ubl conjugation pathway</keyword>
<keyword id="KW-0862">Zinc</keyword>
<keyword id="KW-0863">Zinc-finger</keyword>
<sequence length="612" mass="67296">MFRTAVMMAASLALTGAVVAHAYYLKHQFYPTVVYLTKSSPSMAVLYIQAFVLVFLLGKVMGKVFFGQLRAAEMEHLLERSWYAVTETCLAFTVFRDDFSPRFVALFTLLLFLKCFHWLAEDRVDFMERSPNISWLFHCRIVSLMFLLGILDFLFVSHAYHSILTRGASVQLVFGFEYAILMTMVLTIFIKYVLHSVDLQSENPWDNKAVYMLYTELFTGFIKVLLYMAFMTIMIKVHTFPLFAIRPMYLAMRQFKKAVTDAIMSRRAIRNMNTLYPDATPEELQAVDNVCIICREEMVTGAKRLPCNHIFHTSCLRSWFQRQQTCPTCRMDVLRASLPAQSPPPPEPADQGPPPAPHPQPLLPQPPNFPQGLLPPFPPGMFPLWPPMGPFPPVPPPPSSGEAAAPPPTSTAVSRPSGAATTTAAGTSTSAPAPGSVPGPEAGPAPGFPFPPPWMGMPLPPPFAFPPMPVPPAGFAGLTPEELRALEGHERQHLEARLQSLRNIHTLLDAAMLQINQYLTVLASLGPPRPATSVNPTEETASTVVSAAPSTSAPSSEAPTPSPGASPPIPEAEKPPAPESVGIVEELPEDGEPDAAELRRRRLQKLESPVAH</sequence>
<gene>
    <name type="primary">Syvn1</name>
    <name type="synonym">Hrd1</name>
    <name type="synonym">Kiaa1810</name>
</gene>
<protein>
    <recommendedName>
        <fullName>E3 ubiquitin-protein ligase synoviolin</fullName>
        <ecNumber evidence="13 14">2.3.2.27</ecNumber>
    </recommendedName>
    <alternativeName>
        <fullName evidence="16">RING-type E3 ubiquitin transferase synoviolin</fullName>
    </alternativeName>
    <alternativeName>
        <fullName>Synovial apoptosis inhibitor 1</fullName>
    </alternativeName>
</protein>
<reference key="1">
    <citation type="journal article" date="2003" name="DNA Res.">
        <title>Prediction of the coding sequences of mouse homologues of KIAA gene: II. The complete nucleotide sequences of 400 mouse KIAA-homologous cDNAs identified by screening of terminal sequences of cDNA clones randomly sampled from size-fractionated libraries.</title>
        <authorList>
            <person name="Okazaki N."/>
            <person name="Kikuno R."/>
            <person name="Ohara R."/>
            <person name="Inamoto S."/>
            <person name="Aizawa H."/>
            <person name="Yuasa S."/>
            <person name="Nakajima D."/>
            <person name="Nagase T."/>
            <person name="Ohara O."/>
            <person name="Koga H."/>
        </authorList>
    </citation>
    <scope>NUCLEOTIDE SEQUENCE [LARGE SCALE MRNA] (ISOFORM 2)</scope>
</reference>
<reference key="2">
    <citation type="journal article" date="2005" name="Science">
        <title>The transcriptional landscape of the mammalian genome.</title>
        <authorList>
            <person name="Carninci P."/>
            <person name="Kasukawa T."/>
            <person name="Katayama S."/>
            <person name="Gough J."/>
            <person name="Frith M.C."/>
            <person name="Maeda N."/>
            <person name="Oyama R."/>
            <person name="Ravasi T."/>
            <person name="Lenhard B."/>
            <person name="Wells C."/>
            <person name="Kodzius R."/>
            <person name="Shimokawa K."/>
            <person name="Bajic V.B."/>
            <person name="Brenner S.E."/>
            <person name="Batalov S."/>
            <person name="Forrest A.R."/>
            <person name="Zavolan M."/>
            <person name="Davis M.J."/>
            <person name="Wilming L.G."/>
            <person name="Aidinis V."/>
            <person name="Allen J.E."/>
            <person name="Ambesi-Impiombato A."/>
            <person name="Apweiler R."/>
            <person name="Aturaliya R.N."/>
            <person name="Bailey T.L."/>
            <person name="Bansal M."/>
            <person name="Baxter L."/>
            <person name="Beisel K.W."/>
            <person name="Bersano T."/>
            <person name="Bono H."/>
            <person name="Chalk A.M."/>
            <person name="Chiu K.P."/>
            <person name="Choudhary V."/>
            <person name="Christoffels A."/>
            <person name="Clutterbuck D.R."/>
            <person name="Crowe M.L."/>
            <person name="Dalla E."/>
            <person name="Dalrymple B.P."/>
            <person name="de Bono B."/>
            <person name="Della Gatta G."/>
            <person name="di Bernardo D."/>
            <person name="Down T."/>
            <person name="Engstrom P."/>
            <person name="Fagiolini M."/>
            <person name="Faulkner G."/>
            <person name="Fletcher C.F."/>
            <person name="Fukushima T."/>
            <person name="Furuno M."/>
            <person name="Futaki S."/>
            <person name="Gariboldi M."/>
            <person name="Georgii-Hemming P."/>
            <person name="Gingeras T.R."/>
            <person name="Gojobori T."/>
            <person name="Green R.E."/>
            <person name="Gustincich S."/>
            <person name="Harbers M."/>
            <person name="Hayashi Y."/>
            <person name="Hensch T.K."/>
            <person name="Hirokawa N."/>
            <person name="Hill D."/>
            <person name="Huminiecki L."/>
            <person name="Iacono M."/>
            <person name="Ikeo K."/>
            <person name="Iwama A."/>
            <person name="Ishikawa T."/>
            <person name="Jakt M."/>
            <person name="Kanapin A."/>
            <person name="Katoh M."/>
            <person name="Kawasawa Y."/>
            <person name="Kelso J."/>
            <person name="Kitamura H."/>
            <person name="Kitano H."/>
            <person name="Kollias G."/>
            <person name="Krishnan S.P."/>
            <person name="Kruger A."/>
            <person name="Kummerfeld S.K."/>
            <person name="Kurochkin I.V."/>
            <person name="Lareau L.F."/>
            <person name="Lazarevic D."/>
            <person name="Lipovich L."/>
            <person name="Liu J."/>
            <person name="Liuni S."/>
            <person name="McWilliam S."/>
            <person name="Madan Babu M."/>
            <person name="Madera M."/>
            <person name="Marchionni L."/>
            <person name="Matsuda H."/>
            <person name="Matsuzawa S."/>
            <person name="Miki H."/>
            <person name="Mignone F."/>
            <person name="Miyake S."/>
            <person name="Morris K."/>
            <person name="Mottagui-Tabar S."/>
            <person name="Mulder N."/>
            <person name="Nakano N."/>
            <person name="Nakauchi H."/>
            <person name="Ng P."/>
            <person name="Nilsson R."/>
            <person name="Nishiguchi S."/>
            <person name="Nishikawa S."/>
            <person name="Nori F."/>
            <person name="Ohara O."/>
            <person name="Okazaki Y."/>
            <person name="Orlando V."/>
            <person name="Pang K.C."/>
            <person name="Pavan W.J."/>
            <person name="Pavesi G."/>
            <person name="Pesole G."/>
            <person name="Petrovsky N."/>
            <person name="Piazza S."/>
            <person name="Reed J."/>
            <person name="Reid J.F."/>
            <person name="Ring B.Z."/>
            <person name="Ringwald M."/>
            <person name="Rost B."/>
            <person name="Ruan Y."/>
            <person name="Salzberg S.L."/>
            <person name="Sandelin A."/>
            <person name="Schneider C."/>
            <person name="Schoenbach C."/>
            <person name="Sekiguchi K."/>
            <person name="Semple C.A."/>
            <person name="Seno S."/>
            <person name="Sessa L."/>
            <person name="Sheng Y."/>
            <person name="Shibata Y."/>
            <person name="Shimada H."/>
            <person name="Shimada K."/>
            <person name="Silva D."/>
            <person name="Sinclair B."/>
            <person name="Sperling S."/>
            <person name="Stupka E."/>
            <person name="Sugiura K."/>
            <person name="Sultana R."/>
            <person name="Takenaka Y."/>
            <person name="Taki K."/>
            <person name="Tammoja K."/>
            <person name="Tan S.L."/>
            <person name="Tang S."/>
            <person name="Taylor M.S."/>
            <person name="Tegner J."/>
            <person name="Teichmann S.A."/>
            <person name="Ueda H.R."/>
            <person name="van Nimwegen E."/>
            <person name="Verardo R."/>
            <person name="Wei C.L."/>
            <person name="Yagi K."/>
            <person name="Yamanishi H."/>
            <person name="Zabarovsky E."/>
            <person name="Zhu S."/>
            <person name="Zimmer A."/>
            <person name="Hide W."/>
            <person name="Bult C."/>
            <person name="Grimmond S.M."/>
            <person name="Teasdale R.D."/>
            <person name="Liu E.T."/>
            <person name="Brusic V."/>
            <person name="Quackenbush J."/>
            <person name="Wahlestedt C."/>
            <person name="Mattick J.S."/>
            <person name="Hume D.A."/>
            <person name="Kai C."/>
            <person name="Sasaki D."/>
            <person name="Tomaru Y."/>
            <person name="Fukuda S."/>
            <person name="Kanamori-Katayama M."/>
            <person name="Suzuki M."/>
            <person name="Aoki J."/>
            <person name="Arakawa T."/>
            <person name="Iida J."/>
            <person name="Imamura K."/>
            <person name="Itoh M."/>
            <person name="Kato T."/>
            <person name="Kawaji H."/>
            <person name="Kawagashira N."/>
            <person name="Kawashima T."/>
            <person name="Kojima M."/>
            <person name="Kondo S."/>
            <person name="Konno H."/>
            <person name="Nakano K."/>
            <person name="Ninomiya N."/>
            <person name="Nishio T."/>
            <person name="Okada M."/>
            <person name="Plessy C."/>
            <person name="Shibata K."/>
            <person name="Shiraki T."/>
            <person name="Suzuki S."/>
            <person name="Tagami M."/>
            <person name="Waki K."/>
            <person name="Watahiki A."/>
            <person name="Okamura-Oho Y."/>
            <person name="Suzuki H."/>
            <person name="Kawai J."/>
            <person name="Hayashizaki Y."/>
        </authorList>
    </citation>
    <scope>NUCLEOTIDE SEQUENCE [LARGE SCALE MRNA] (ISOFORM 1)</scope>
    <source>
        <strain>C57BL/6J</strain>
        <tissue>Lung</tissue>
    </source>
</reference>
<reference key="3">
    <citation type="journal article" date="2004" name="Genome Res.">
        <title>The status, quality, and expansion of the NIH full-length cDNA project: the Mammalian Gene Collection (MGC).</title>
        <authorList>
            <consortium name="The MGC Project Team"/>
        </authorList>
    </citation>
    <scope>NUCLEOTIDE SEQUENCE [LARGE SCALE MRNA] (ISOFORM 1)</scope>
    <source>
        <strain>C57BL/6J</strain>
        <strain>FVB/N</strain>
        <tissue>Brain</tissue>
        <tissue>Mammary tumor</tissue>
    </source>
</reference>
<reference key="4">
    <citation type="journal article" date="2003" name="Genes Dev.">
        <title>Synoviolin/Hrd1, an E3 ubiquitin ligase, as a novel pathogenic factor for arthropathy.</title>
        <authorList>
            <person name="Amano T."/>
            <person name="Yamasaki S."/>
            <person name="Yagishita N."/>
            <person name="Tsuchimochi K."/>
            <person name="Shin H."/>
            <person name="Kawahara K."/>
            <person name="Aratani S."/>
            <person name="Fujita H."/>
            <person name="Zhang L."/>
            <person name="Ikeda R."/>
            <person name="Fujii R."/>
            <person name="Miura N."/>
            <person name="Komiya S."/>
            <person name="Nishioka K."/>
            <person name="Maruyama I."/>
            <person name="Fukamizu A."/>
            <person name="Nakajima T."/>
        </authorList>
    </citation>
    <scope>FUNCTION</scope>
    <scope>TISSUE SPECIFICITY</scope>
</reference>
<reference key="5">
    <citation type="journal article" date="2004" name="Brain Res. Mol. Brain Res.">
        <title>Induction of murine HRD1 in experimental cerebral ischemia.</title>
        <authorList>
            <person name="Qi X."/>
            <person name="Okuma Y."/>
            <person name="Hosoi T."/>
            <person name="Kaneko M."/>
            <person name="Nomura Y."/>
        </authorList>
    </citation>
    <scope>INDUCTION BY ISCHEMIA</scope>
</reference>
<reference key="6">
    <citation type="journal article" date="2005" name="J. Biol. Chem.">
        <title>Essential role of synoviolin in embryogenesis.</title>
        <authorList>
            <person name="Yagishita N."/>
            <person name="Ohneda K."/>
            <person name="Amano T."/>
            <person name="Yamasaki S."/>
            <person name="Sugiura A."/>
            <person name="Tsuchimochi K."/>
            <person name="Shin H."/>
            <person name="Kawahara K."/>
            <person name="Ohneda O."/>
            <person name="Ohta T."/>
            <person name="Tanaka S."/>
            <person name="Yamamoto M."/>
            <person name="Maruyama I."/>
            <person name="Nishioka K."/>
            <person name="Fukamizu A."/>
            <person name="Nakajima T."/>
        </authorList>
    </citation>
    <scope>FUNCTION</scope>
</reference>
<reference key="7">
    <citation type="journal article" date="2006" name="J. Neurochem.">
        <title>A ubiquitin ligase HRD1 promotes the degradation of Pael receptor, a substrate of Parkin.</title>
        <authorList>
            <person name="Omura T."/>
            <person name="Kaneko M."/>
            <person name="Okuma Y."/>
            <person name="Orba Y."/>
            <person name="Nagashima K."/>
            <person name="Takahashi R."/>
            <person name="Fujitani N."/>
            <person name="Matsumura S."/>
            <person name="Hata A."/>
            <person name="Kubota K."/>
            <person name="Murahashi K."/>
            <person name="Uehara T."/>
            <person name="Nomura Y."/>
        </authorList>
    </citation>
    <scope>TISSUE SPECIFICITY</scope>
    <scope>SUBCELLULAR LOCATION</scope>
</reference>
<reference key="8">
    <citation type="journal article" date="2007" name="EMBO J.">
        <title>Cytoplasmic destruction of p53 by the endoplasmic reticulum-resident ubiquitin ligase 'Synoviolin'.</title>
        <authorList>
            <person name="Yamasaki S."/>
            <person name="Yagishita N."/>
            <person name="Sasaki T."/>
            <person name="Nakazawa M."/>
            <person name="Kato Y."/>
            <person name="Yamadera T."/>
            <person name="Bae E."/>
            <person name="Toriyama S."/>
            <person name="Ikeda R."/>
            <person name="Zhang L."/>
            <person name="Fujitani K."/>
            <person name="Yoo E."/>
            <person name="Tsuchimochi K."/>
            <person name="Ohta T."/>
            <person name="Araya N."/>
            <person name="Fujita H."/>
            <person name="Aratani S."/>
            <person name="Eguchi K."/>
            <person name="Komiya S."/>
            <person name="Maruyama I."/>
            <person name="Higashi N."/>
            <person name="Sato M."/>
            <person name="Senoo H."/>
            <person name="Ochi T."/>
            <person name="Yokoyama S."/>
            <person name="Amano T."/>
            <person name="Kim J."/>
            <person name="Gay S."/>
            <person name="Fukamizu A."/>
            <person name="Nishioka K."/>
            <person name="Tanaka K."/>
            <person name="Nakajima T."/>
        </authorList>
    </citation>
    <scope>FUNCTION</scope>
    <scope>INTERACTION WITH TP53</scope>
</reference>
<reference key="9">
    <citation type="journal article" date="2010" name="Cell">
        <title>A tissue-specific atlas of mouse protein phosphorylation and expression.</title>
        <authorList>
            <person name="Huttlin E.L."/>
            <person name="Jedrychowski M.P."/>
            <person name="Elias J.E."/>
            <person name="Goswami T."/>
            <person name="Rad R."/>
            <person name="Beausoleil S.A."/>
            <person name="Villen J."/>
            <person name="Haas W."/>
            <person name="Sowa M.E."/>
            <person name="Gygi S.P."/>
        </authorList>
    </citation>
    <scope>IDENTIFICATION BY MASS SPECTROMETRY [LARGE SCALE ANALYSIS]</scope>
    <source>
        <tissue>Liver</tissue>
        <tissue>Pancreas</tissue>
        <tissue>Spleen</tissue>
        <tissue>Testis</tissue>
    </source>
</reference>
<reference key="10">
    <citation type="journal article" date="2016" name="Sci. Rep.">
        <title>Crystal structure of SEL1L: Insight into the roles of SLR motifs in ERAD pathway.</title>
        <authorList>
            <person name="Jeong H."/>
            <person name="Sim H.J."/>
            <person name="Song E.K."/>
            <person name="Lee H."/>
            <person name="Ha S.C."/>
            <person name="Jun Y."/>
            <person name="Park T.J."/>
            <person name="Lee C."/>
        </authorList>
    </citation>
    <scope>INTERACTION WITH SEL1L</scope>
</reference>
<reference key="11">
    <citation type="journal article" date="2011" name="Mol. Cell. Biol.">
        <title>Dual regulation of the transcriptional activity of Nrf1 by beta-TrCP- and Hrd1-dependent degradation mechanisms.</title>
        <authorList>
            <person name="Tsuchiya Y."/>
            <person name="Morita T."/>
            <person name="Kim M."/>
            <person name="Iemura S."/>
            <person name="Natsume T."/>
            <person name="Yamamoto M."/>
            <person name="Kobayashi A."/>
        </authorList>
    </citation>
    <scope>FUNCTION</scope>
    <scope>INTERACTION WITH NFE2L1</scope>
</reference>
<reference key="12">
    <citation type="journal article" date="2018" name="EMBO J.">
        <title>HRD1-ERAD controls production of the hepatokine FGF21 through CREBH polyubiquitination.</title>
        <authorList>
            <person name="Wei J."/>
            <person name="Chen L."/>
            <person name="Li F."/>
            <person name="Yuan Y."/>
            <person name="Wang Y."/>
            <person name="Xia W."/>
            <person name="Zhang Y."/>
            <person name="Xu Y."/>
            <person name="Yang Z."/>
            <person name="Gao B."/>
            <person name="Jin C."/>
            <person name="Melo-Cardenas J."/>
            <person name="Green R.M."/>
            <person name="Pan H."/>
            <person name="Wang J."/>
            <person name="He F."/>
            <person name="Zhang K."/>
            <person name="Fang D."/>
        </authorList>
    </citation>
    <scope>TISSUE SPECIFICITY</scope>
    <scope>INDUCTION</scope>
    <scope>INTERACTION WITH CREB3L3</scope>
    <scope>CATALYTIC ACTIVITY</scope>
</reference>
<reference key="13">
    <citation type="journal article" date="2018" name="J. Biol. Chem.">
        <title>The endoplasmic reticulum-resident E3 ubiquitin ligase Hrd1 controls a critical checkpoint in B cell development in mice.</title>
        <authorList>
            <person name="Yang Y."/>
            <person name="Kong S."/>
            <person name="Zhang Y."/>
            <person name="Melo-Cardenas J."/>
            <person name="Gao B."/>
            <person name="Zhang Y."/>
            <person name="Zhang D.D."/>
            <person name="Zhang B."/>
            <person name="Song J."/>
            <person name="Thorp E."/>
            <person name="Zhang K."/>
            <person name="Zhang J."/>
            <person name="Fang D."/>
        </authorList>
    </citation>
    <scope>FUNCTION</scope>
    <scope>SUBCELLULAR LOCATION</scope>
    <scope>INTERACTION WITH IGLL1 AND VPREB1A</scope>
    <scope>CATALYTIC ACTIVITY</scope>
</reference>
<comment type="function">
    <text evidence="6 8 10 11 13">E3 ubiquitin-protein ligase which accepts ubiquitin specifically from endoplasmic reticulum-associated UBC7 E2 ligase and transfers it to substrates, promoting their degradation (PubMed:12975321, PubMed:15611074). Component of the endoplasmic reticulum quality control (ERQC) system also called ER-associated degradation (ERAD) involved in ubiquitin-dependent degradation of misfolded endoplasmic reticulum proteins (PubMed:12975321, PubMed:15611074). Also promotes the degradation of normal but naturally short-lived proteins such as SGK. Protects cells from ER stress-induced apoptosis. Sequesters p53/TP53 in the cytoplasm and promotes its degradation, thereby negatively regulating its biological function in transcription, cell cycle regulation and apoptosis (PubMed:17170702). Required for embryogenesis (PubMed:15611074). Mediates the ubiquitination and subsequent degradation of cytoplasmic NFE2L1 (PubMed:21911472). During the early stage of B cell development, required for degradation of the pre-B cell receptor (pre-BCR) complex, hence supporting further differentiation into mature B cells (PubMed:29907570).</text>
</comment>
<comment type="catalytic activity">
    <reaction evidence="13 14">
        <text>S-ubiquitinyl-[E2 ubiquitin-conjugating enzyme]-L-cysteine + [acceptor protein]-L-lysine = [E2 ubiquitin-conjugating enzyme]-L-cysteine + N(6)-ubiquitinyl-[acceptor protein]-L-lysine.</text>
        <dbReference type="EC" id="2.3.2.27"/>
    </reaction>
</comment>
<comment type="pathway">
    <text>Protein modification; protein ubiquitination.</text>
</comment>
<comment type="subunit">
    <text evidence="2 10 11 12 13 14">Homodimer (By similarity). Interacts with p53/TP53 (PubMed:17170702). Interacts with HTT (By similarity). Component of the HRD1 complex, which comprises at least SYNV1/HRD1, DERL1/2, FAM8A1, HERPUD1/HERP, OS9, SEL1L and UBE2J1 (By similarity) (PubMed:27064360). FAM8A1 is stabilized by interaction with SYNV1, which prevents its proteasomal degradation. OS9 and UBE2J1 recruitment to the complex may be mediated by SEL1L (By similarity). SYNV1 assembles with SEL1L and FAM8A1 through its transmembrane domains, but interaction with its cytoplasmic domain is required to confer stability to FAM8A1 and enhance recruitment of HERPUD1 (By similarity). The HRD1 complex also associates with VIMP and may transfer misfolded proteins from the endoplasmic reticulum to VCP (By similarity). May form a complex with ERLEC1; HSPA5; OS9 and SEL1L (By similarity). Interacts with VCP (By similarity). Interacts with UBXN6 (By similarity). Interacts with BAG6 (By similarity). Interacts with NFE2L1 (PubMed:21911472). Interacts (via N-terminus) with components of the pre-B cell receptor, including IGLL1 and VPREB1A (PubMed:29907570). Interacts with CREB3L3; this interaction leads to CREB3L3 ubiquitination and proteasomal degradation (PubMed:30389664).</text>
</comment>
<comment type="interaction">
    <interactant intactId="EBI-644384">
        <id>Q9DBY1</id>
    </interactant>
    <interactant intactId="EBI-998934">
        <id>P57716</id>
        <label>Ncstn</label>
    </interactant>
    <organismsDiffer>false</organismsDiffer>
    <experiments>2</experiments>
</comment>
<comment type="subcellular location">
    <subcellularLocation>
        <location evidence="9 13">Endoplasmic reticulum membrane</location>
        <topology evidence="9">Multi-pass membrane protein</topology>
    </subcellularLocation>
</comment>
<comment type="alternative products">
    <event type="alternative splicing"/>
    <isoform>
        <id>Q9DBY1-1</id>
        <name>1</name>
        <sequence type="displayed"/>
    </isoform>
    <isoform>
        <id>Q9DBY1-2</id>
        <name>2</name>
        <sequence type="described" ref="VSP_023779 VSP_023780 VSP_023781 VSP_023782 VSP_023783"/>
    </isoform>
</comment>
<comment type="tissue specificity">
    <text evidence="6 9 14">Widely expressed, with highest levels in bone, spleen, lung and testis. In the brain, present in neurons but not in glial cells. Up-regulated in synovial tissues from mice with collagen-induced arthritis (at protein level). Expressed in the liver (PubMed:30389664).</text>
</comment>
<comment type="induction">
    <text evidence="7 14">Up-regulated in conditions of cerebral ischemia (PubMed:15519674). In the liver, induced in postprandial conditions (PubMed:30389664).</text>
</comment>
<comment type="domain">
    <text evidence="1">The RING-type zinc finger is required for E3 ligase activity.</text>
</comment>
<comment type="PTM">
    <text evidence="2">Auto-ubiquitinated. Deubiquitinated by USP19.</text>
</comment>
<comment type="miscellaneous">
    <text>Mice overexpressing Syvn1 develop severe spontaneous arthropathy. Mice lacking Syvn1 die in utero around 13.5 dpc due to augmented apoptotic cell death.</text>
</comment>
<comment type="similarity">
    <text evidence="16">Belongs to the HRD1 family.</text>
</comment>
<accession>Q9DBY1</accession>
<accession>Q80T88</accession>
<accession>Q8CGB5</accession>
<proteinExistence type="evidence at protein level"/>
<organism>
    <name type="scientific">Mus musculus</name>
    <name type="common">Mouse</name>
    <dbReference type="NCBI Taxonomy" id="10090"/>
    <lineage>
        <taxon>Eukaryota</taxon>
        <taxon>Metazoa</taxon>
        <taxon>Chordata</taxon>
        <taxon>Craniata</taxon>
        <taxon>Vertebrata</taxon>
        <taxon>Euteleostomi</taxon>
        <taxon>Mammalia</taxon>
        <taxon>Eutheria</taxon>
        <taxon>Euarchontoglires</taxon>
        <taxon>Glires</taxon>
        <taxon>Rodentia</taxon>
        <taxon>Myomorpha</taxon>
        <taxon>Muroidea</taxon>
        <taxon>Muridae</taxon>
        <taxon>Murinae</taxon>
        <taxon>Mus</taxon>
        <taxon>Mus</taxon>
    </lineage>
</organism>
<evidence type="ECO:0000250" key="1"/>
<evidence type="ECO:0000250" key="2">
    <source>
        <dbReference type="UniProtKB" id="Q86TM6"/>
    </source>
</evidence>
<evidence type="ECO:0000255" key="3"/>
<evidence type="ECO:0000255" key="4">
    <source>
        <dbReference type="PROSITE-ProRule" id="PRU00175"/>
    </source>
</evidence>
<evidence type="ECO:0000256" key="5">
    <source>
        <dbReference type="SAM" id="MobiDB-lite"/>
    </source>
</evidence>
<evidence type="ECO:0000269" key="6">
    <source>
    </source>
</evidence>
<evidence type="ECO:0000269" key="7">
    <source>
    </source>
</evidence>
<evidence type="ECO:0000269" key="8">
    <source>
    </source>
</evidence>
<evidence type="ECO:0000269" key="9">
    <source>
    </source>
</evidence>
<evidence type="ECO:0000269" key="10">
    <source>
    </source>
</evidence>
<evidence type="ECO:0000269" key="11">
    <source>
    </source>
</evidence>
<evidence type="ECO:0000269" key="12">
    <source>
    </source>
</evidence>
<evidence type="ECO:0000269" key="13">
    <source>
    </source>
</evidence>
<evidence type="ECO:0000269" key="14">
    <source>
    </source>
</evidence>
<evidence type="ECO:0000303" key="15">
    <source>
    </source>
</evidence>
<evidence type="ECO:0000305" key="16"/>